<protein>
    <recommendedName>
        <fullName evidence="1">Probable malate:quinone oxidoreductase</fullName>
        <ecNumber evidence="1">1.1.5.4</ecNumber>
    </recommendedName>
    <alternativeName>
        <fullName evidence="1">MQO</fullName>
    </alternativeName>
    <alternativeName>
        <fullName evidence="1">Malate dehydrogenase [quinone]</fullName>
    </alternativeName>
</protein>
<accession>Q4JV42</accession>
<evidence type="ECO:0000255" key="1">
    <source>
        <dbReference type="HAMAP-Rule" id="MF_00212"/>
    </source>
</evidence>
<organism>
    <name type="scientific">Corynebacterium jeikeium (strain K411)</name>
    <dbReference type="NCBI Taxonomy" id="306537"/>
    <lineage>
        <taxon>Bacteria</taxon>
        <taxon>Bacillati</taxon>
        <taxon>Actinomycetota</taxon>
        <taxon>Actinomycetes</taxon>
        <taxon>Mycobacteriales</taxon>
        <taxon>Corynebacteriaceae</taxon>
        <taxon>Corynebacterium</taxon>
    </lineage>
</organism>
<comment type="catalytic activity">
    <reaction evidence="1">
        <text>(S)-malate + a quinone = a quinol + oxaloacetate</text>
        <dbReference type="Rhea" id="RHEA:46012"/>
        <dbReference type="ChEBI" id="CHEBI:15589"/>
        <dbReference type="ChEBI" id="CHEBI:16452"/>
        <dbReference type="ChEBI" id="CHEBI:24646"/>
        <dbReference type="ChEBI" id="CHEBI:132124"/>
        <dbReference type="EC" id="1.1.5.4"/>
    </reaction>
</comment>
<comment type="cofactor">
    <cofactor evidence="1">
        <name>FAD</name>
        <dbReference type="ChEBI" id="CHEBI:57692"/>
    </cofactor>
</comment>
<comment type="pathway">
    <text evidence="1">Carbohydrate metabolism; tricarboxylic acid cycle; oxaloacetate from (S)-malate (quinone route): step 1/1.</text>
</comment>
<comment type="similarity">
    <text evidence="1">Belongs to the MQO family.</text>
</comment>
<sequence>MAHKDSVDVALIGAGVISTTLSVMLKQLQPDWSQVIIERLDTPGAESSDPWNNAGTGHSALCELNYTPEVNGKIDISKAVGVNEKFQVSRQFWSYLVEQNVLGDPSEFINKVPHVSFAQGMDQVDYLKARYEALKDHPLFPNMQYSDSDEKFAEFLPLMARGRDFNNPVAISWFDEGTDINYGALTRQYLDAVTAQGVEVRFGNEVKNINRDGSKWKITTKNLHTGDTSMVTANFVFIGAGGMALPLLQKAGIPEIKGYGGFPVSGQWLRCTNPELVEQHQAKVYGKASVGAPPMSVPHLDTRVIDGKKGLLFGPYAGWTPKFLKKGSYLDLFKSLRVGNLPSYLGVGVQEMGLTKYLIEEVLKDQAARVESLREYMPEARAEDWELVTAGQRVQVIKPIGAPKFGSLEFGTALINSNDGSIAGLMGASPGASIAPSAMLEVLERCFGNRIADWAPKLREMIPSYGTRLSKDANLFNEQWDRSQKALKLV</sequence>
<gene>
    <name evidence="1" type="primary">mqo</name>
    <name type="ordered locus">jk1151</name>
</gene>
<reference key="1">
    <citation type="journal article" date="2005" name="J. Bacteriol.">
        <title>Complete genome sequence and analysis of the multiresistant nosocomial pathogen Corynebacterium jeikeium K411, a lipid-requiring bacterium of the human skin flora.</title>
        <authorList>
            <person name="Tauch A."/>
            <person name="Kaiser O."/>
            <person name="Hain T."/>
            <person name="Goesmann A."/>
            <person name="Weisshaar B."/>
            <person name="Albersmeier A."/>
            <person name="Bekel T."/>
            <person name="Bischoff N."/>
            <person name="Brune I."/>
            <person name="Chakraborty T."/>
            <person name="Kalinowski J."/>
            <person name="Meyer F."/>
            <person name="Rupp O."/>
            <person name="Schneiker S."/>
            <person name="Viehoever P."/>
            <person name="Puehler A."/>
        </authorList>
    </citation>
    <scope>NUCLEOTIDE SEQUENCE [LARGE SCALE GENOMIC DNA]</scope>
    <source>
        <strain>K411</strain>
    </source>
</reference>
<proteinExistence type="inferred from homology"/>
<keyword id="KW-0274">FAD</keyword>
<keyword id="KW-0285">Flavoprotein</keyword>
<keyword id="KW-0560">Oxidoreductase</keyword>
<keyword id="KW-1185">Reference proteome</keyword>
<keyword id="KW-0816">Tricarboxylic acid cycle</keyword>
<feature type="chain" id="PRO_1000023797" description="Probable malate:quinone oxidoreductase">
    <location>
        <begin position="1"/>
        <end position="490"/>
    </location>
</feature>
<name>MQO_CORJK</name>
<dbReference type="EC" id="1.1.5.4" evidence="1"/>
<dbReference type="EMBL" id="CR931997">
    <property type="protein sequence ID" value="CAI37315.1"/>
    <property type="molecule type" value="Genomic_DNA"/>
</dbReference>
<dbReference type="RefSeq" id="WP_011273686.1">
    <property type="nucleotide sequence ID" value="NC_007164.1"/>
</dbReference>
<dbReference type="SMR" id="Q4JV42"/>
<dbReference type="STRING" id="306537.jk1151"/>
<dbReference type="GeneID" id="92738670"/>
<dbReference type="KEGG" id="cjk:jk1151"/>
<dbReference type="eggNOG" id="COG0579">
    <property type="taxonomic scope" value="Bacteria"/>
</dbReference>
<dbReference type="HOGENOM" id="CLU_028151_0_0_11"/>
<dbReference type="OrthoDB" id="9763983at2"/>
<dbReference type="UniPathway" id="UPA00223">
    <property type="reaction ID" value="UER01008"/>
</dbReference>
<dbReference type="Proteomes" id="UP000000545">
    <property type="component" value="Chromosome"/>
</dbReference>
<dbReference type="GO" id="GO:0047545">
    <property type="term" value="F:2-hydroxyglutarate dehydrogenase activity"/>
    <property type="evidence" value="ECO:0007669"/>
    <property type="project" value="TreeGrafter"/>
</dbReference>
<dbReference type="GO" id="GO:0008924">
    <property type="term" value="F:L-malate dehydrogenase (quinone) activity"/>
    <property type="evidence" value="ECO:0007669"/>
    <property type="project" value="UniProtKB-UniRule"/>
</dbReference>
<dbReference type="GO" id="GO:0006099">
    <property type="term" value="P:tricarboxylic acid cycle"/>
    <property type="evidence" value="ECO:0007669"/>
    <property type="project" value="UniProtKB-UniRule"/>
</dbReference>
<dbReference type="Gene3D" id="3.30.9.10">
    <property type="entry name" value="D-Amino Acid Oxidase, subunit A, domain 2"/>
    <property type="match status" value="1"/>
</dbReference>
<dbReference type="Gene3D" id="3.50.50.60">
    <property type="entry name" value="FAD/NAD(P)-binding domain"/>
    <property type="match status" value="1"/>
</dbReference>
<dbReference type="HAMAP" id="MF_00212">
    <property type="entry name" value="MQO"/>
    <property type="match status" value="1"/>
</dbReference>
<dbReference type="InterPro" id="IPR036188">
    <property type="entry name" value="FAD/NAD-bd_sf"/>
</dbReference>
<dbReference type="InterPro" id="IPR006231">
    <property type="entry name" value="MQO"/>
</dbReference>
<dbReference type="NCBIfam" id="TIGR01320">
    <property type="entry name" value="mal_quin_oxido"/>
    <property type="match status" value="1"/>
</dbReference>
<dbReference type="NCBIfam" id="NF003606">
    <property type="entry name" value="PRK05257.2-1"/>
    <property type="match status" value="1"/>
</dbReference>
<dbReference type="NCBIfam" id="NF003611">
    <property type="entry name" value="PRK05257.3-2"/>
    <property type="match status" value="1"/>
</dbReference>
<dbReference type="NCBIfam" id="NF009875">
    <property type="entry name" value="PRK13339.1"/>
    <property type="match status" value="1"/>
</dbReference>
<dbReference type="PANTHER" id="PTHR43104">
    <property type="entry name" value="L-2-HYDROXYGLUTARATE DEHYDROGENASE, MITOCHONDRIAL"/>
    <property type="match status" value="1"/>
</dbReference>
<dbReference type="PANTHER" id="PTHR43104:SF2">
    <property type="entry name" value="L-2-HYDROXYGLUTARATE DEHYDROGENASE, MITOCHONDRIAL"/>
    <property type="match status" value="1"/>
</dbReference>
<dbReference type="Pfam" id="PF06039">
    <property type="entry name" value="Mqo"/>
    <property type="match status" value="1"/>
</dbReference>
<dbReference type="SUPFAM" id="SSF51905">
    <property type="entry name" value="FAD/NAD(P)-binding domain"/>
    <property type="match status" value="1"/>
</dbReference>